<accession>Q5REX1</accession>
<accession>Q5RD38</accession>
<sequence>MVMADGPRHLQRGPVRVGFYDIEGTLGKGNFAVVKLGRHRITKTEVAIKIIDKSQLDAVNLEKIYREVQIMKMLDHPHIIKLYQVMETKSMLYLVTEYAKNGEIFDYLANHGRLNESEARRKFWQILSAVDYCHGRKIVHRDLKAENLLLDNNMNIKIADFSFGNFFKSGELLATWRGSPPYAAPEVFEGQQYEGPQLDIWSMGVVLYVLVCGALPFDGPTLPILRQRVLEGRFRIPYFMSEDCEHLIRRMLVLDPSKRLTIAQIKEHKWMLIEVPVQRPVLYPQEQENEPSIGEFNEQVLRLMHSLGIDQQKTIESLQNKSYNHFAAIYFLLVERLKSHRSSFPVEQRLDGRQRRPSAIAEQTVAKAQTVGLPVTMHSPNMRLLRSALLPQASNVEAFSFPASGCQAETAFMEEECVDTPKVNGCLLDPVPPVLVRKGCQSLPSNMMETSIDEGLETEGEAEEDPAHAFEAFQSTRSGQRRHTLSEVTNQLVVMPGAGKIFSMNDSPSLDSVDSEYDMGSVQRDLNFLEDNPSLKDIMLANQPSPRKTSPFISLRPTNPAMQALSSQKREVHNRSPVSFREGRRASDTSLTQGIVAFRQHLQNLARTKGILELNKVQLLYEQIGPEADPNLAPAAPQLQDHASSCPQEEVSQQQESVSTLPASVHPQLSPRQSLETQYLQHRLQKPSLLSKAQNTCQLYCKEPPRSLEQQLQEHRLQQKRLFLQKQSQLQAYFNQMQIAESSYPQPSQQLPLPRQETPPPSQQAPPFSLTQPLSPVLEPSSEQMQYSPFLSQYQEMQLQPLPSTSSPRAAPLPTQLQQQQPPPPPPPPPPRQPGAAPAPLQFSYQTCELPSAAPPAPDYPTPCQYPVDGAQQSDLTGPDCPRSPGLQEAPSSYDPLALSELPGLFDCEMLDAVDPQHNGYVLAN</sequence>
<organism>
    <name type="scientific">Pongo abelii</name>
    <name type="common">Sumatran orangutan</name>
    <name type="synonym">Pongo pygmaeus abelii</name>
    <dbReference type="NCBI Taxonomy" id="9601"/>
    <lineage>
        <taxon>Eukaryota</taxon>
        <taxon>Metazoa</taxon>
        <taxon>Chordata</taxon>
        <taxon>Craniata</taxon>
        <taxon>Vertebrata</taxon>
        <taxon>Euteleostomi</taxon>
        <taxon>Mammalia</taxon>
        <taxon>Eutheria</taxon>
        <taxon>Euarchontoglires</taxon>
        <taxon>Primates</taxon>
        <taxon>Haplorrhini</taxon>
        <taxon>Catarrhini</taxon>
        <taxon>Hominidae</taxon>
        <taxon>Pongo</taxon>
    </lineage>
</organism>
<comment type="function">
    <text evidence="3 4">Serine/threonine-protein kinase that plays a role in many biological processes such as fatty acid oxidation, autophagy, immune response or glucose metabolism. Phosphorylates 'Ser-794' of IRS1 in insulin-stimulated adipocytes, potentially modulating the efficiency of insulin signal transduction. Inhibits CREB activity by phosphorylating and repressing TORCs, the CREB-specific coactivators. Phosphorylates EP300 and thus inhibits its histone acetyltransferase activity. In turn, regulates the DNA-binding ability of several transcription factors such as PPARA or MLXIPL (By similarity). Also plays a role in thymic T-cell development (By similarity).</text>
</comment>
<comment type="catalytic activity">
    <reaction evidence="4">
        <text>L-seryl-[protein] + ATP = O-phospho-L-seryl-[protein] + ADP + H(+)</text>
        <dbReference type="Rhea" id="RHEA:17989"/>
        <dbReference type="Rhea" id="RHEA-COMP:9863"/>
        <dbReference type="Rhea" id="RHEA-COMP:11604"/>
        <dbReference type="ChEBI" id="CHEBI:15378"/>
        <dbReference type="ChEBI" id="CHEBI:29999"/>
        <dbReference type="ChEBI" id="CHEBI:30616"/>
        <dbReference type="ChEBI" id="CHEBI:83421"/>
        <dbReference type="ChEBI" id="CHEBI:456216"/>
        <dbReference type="EC" id="2.7.11.1"/>
    </reaction>
</comment>
<comment type="catalytic activity">
    <reaction evidence="4">
        <text>L-threonyl-[protein] + ATP = O-phospho-L-threonyl-[protein] + ADP + H(+)</text>
        <dbReference type="Rhea" id="RHEA:46608"/>
        <dbReference type="Rhea" id="RHEA-COMP:11060"/>
        <dbReference type="Rhea" id="RHEA-COMP:11605"/>
        <dbReference type="ChEBI" id="CHEBI:15378"/>
        <dbReference type="ChEBI" id="CHEBI:30013"/>
        <dbReference type="ChEBI" id="CHEBI:30616"/>
        <dbReference type="ChEBI" id="CHEBI:61977"/>
        <dbReference type="ChEBI" id="CHEBI:456216"/>
        <dbReference type="EC" id="2.7.11.1"/>
    </reaction>
</comment>
<comment type="cofactor">
    <cofactor evidence="4">
        <name>Mg(2+)</name>
        <dbReference type="ChEBI" id="CHEBI:18420"/>
    </cofactor>
</comment>
<comment type="activity regulation">
    <text evidence="1">Activated by phosphorylation on Thr-175.</text>
</comment>
<comment type="subunit">
    <text evidence="1">Interacts with and phosphorylates TORC2/CRTC2.</text>
</comment>
<comment type="subcellular location">
    <subcellularLocation>
        <location evidence="4">Cytoplasm</location>
    </subcellularLocation>
    <subcellularLocation>
        <location evidence="4">Endoplasmic reticulum membrane</location>
    </subcellularLocation>
</comment>
<comment type="PTM">
    <text evidence="4">Phosphorylated at Thr-175 by STK11/LKB1 in complex with STE20-related adapter-alpha (STRADA) pseudo kinase and CAB39. Phosphorylated at Thr-484 in response to insulin in adipocytes.</text>
</comment>
<comment type="PTM">
    <text evidence="4">Acetylation at Lys-53 inhibits kinase activity. Deacetylated by HDAC6.</text>
</comment>
<comment type="similarity">
    <text evidence="9">Belongs to the protein kinase superfamily. CAMK Ser/Thr protein kinase family. SNF1 subfamily.</text>
</comment>
<proteinExistence type="evidence at transcript level"/>
<gene>
    <name type="primary">SIK2</name>
    <name type="synonym">SNF1LK2</name>
</gene>
<keyword id="KW-0007">Acetylation</keyword>
<keyword id="KW-0067">ATP-binding</keyword>
<keyword id="KW-0963">Cytoplasm</keyword>
<keyword id="KW-0256">Endoplasmic reticulum</keyword>
<keyword id="KW-0418">Kinase</keyword>
<keyword id="KW-0460">Magnesium</keyword>
<keyword id="KW-0472">Membrane</keyword>
<keyword id="KW-0479">Metal-binding</keyword>
<keyword id="KW-0547">Nucleotide-binding</keyword>
<keyword id="KW-0597">Phosphoprotein</keyword>
<keyword id="KW-1185">Reference proteome</keyword>
<keyword id="KW-0723">Serine/threonine-protein kinase</keyword>
<keyword id="KW-0808">Transferase</keyword>
<name>SIK2_PONAB</name>
<protein>
    <recommendedName>
        <fullName>Serine/threonine-protein kinase SIK2</fullName>
        <ecNumber>2.7.11.1</ecNumber>
    </recommendedName>
    <alternativeName>
        <fullName>Salt-inducible kinase 2</fullName>
        <shortName>SIK-2</shortName>
    </alternativeName>
    <alternativeName>
        <fullName>Serine/threonine-protein kinase SNF1-like kinase 2</fullName>
    </alternativeName>
</protein>
<reference evidence="9 10" key="1">
    <citation type="submission" date="2004-11" db="EMBL/GenBank/DDBJ databases">
        <authorList>
            <consortium name="The German cDNA consortium"/>
        </authorList>
    </citation>
    <scope>NUCLEOTIDE SEQUENCE [LARGE SCALE MRNA]</scope>
    <source>
        <tissue evidence="10">Brain cortex</tissue>
    </source>
</reference>
<feature type="chain" id="PRO_0000086664" description="Serine/threonine-protein kinase SIK2">
    <location>
        <begin position="1"/>
        <end position="925"/>
    </location>
</feature>
<feature type="domain" description="Protein kinase" evidence="5">
    <location>
        <begin position="20"/>
        <end position="271"/>
    </location>
</feature>
<feature type="domain" description="UBA" evidence="6">
    <location>
        <begin position="295"/>
        <end position="335"/>
    </location>
</feature>
<feature type="region of interest" description="Disordered" evidence="8">
    <location>
        <begin position="564"/>
        <end position="586"/>
    </location>
</feature>
<feature type="region of interest" description="Disordered" evidence="8">
    <location>
        <begin position="630"/>
        <end position="674"/>
    </location>
</feature>
<feature type="region of interest" description="Disordered" evidence="8">
    <location>
        <begin position="742"/>
        <end position="776"/>
    </location>
</feature>
<feature type="region of interest" description="Disordered" evidence="8">
    <location>
        <begin position="800"/>
        <end position="895"/>
    </location>
</feature>
<feature type="compositionally biased region" description="Low complexity" evidence="8">
    <location>
        <begin position="648"/>
        <end position="659"/>
    </location>
</feature>
<feature type="compositionally biased region" description="Low complexity" evidence="8">
    <location>
        <begin position="742"/>
        <end position="756"/>
    </location>
</feature>
<feature type="compositionally biased region" description="Polar residues" evidence="8">
    <location>
        <begin position="765"/>
        <end position="774"/>
    </location>
</feature>
<feature type="compositionally biased region" description="Low complexity" evidence="8">
    <location>
        <begin position="808"/>
        <end position="820"/>
    </location>
</feature>
<feature type="compositionally biased region" description="Pro residues" evidence="8">
    <location>
        <begin position="821"/>
        <end position="833"/>
    </location>
</feature>
<feature type="active site" description="Proton acceptor" evidence="2 5 7">
    <location>
        <position position="142"/>
    </location>
</feature>
<feature type="binding site" evidence="2 5">
    <location>
        <begin position="26"/>
        <end position="34"/>
    </location>
    <ligand>
        <name>ATP</name>
        <dbReference type="ChEBI" id="CHEBI:30616"/>
    </ligand>
</feature>
<feature type="binding site" evidence="3 5">
    <location>
        <position position="49"/>
    </location>
    <ligand>
        <name>ATP</name>
        <dbReference type="ChEBI" id="CHEBI:30616"/>
    </ligand>
</feature>
<feature type="modified residue" description="Phosphothreonine" evidence="4">
    <location>
        <position position="25"/>
    </location>
</feature>
<feature type="modified residue" description="N6-acetyllysine; by EP300" evidence="4">
    <location>
        <position position="53"/>
    </location>
</feature>
<feature type="modified residue" description="Phosphothreonine" evidence="4">
    <location>
        <position position="175"/>
    </location>
</feature>
<feature type="modified residue" description="Phosphoserine" evidence="3">
    <location>
        <position position="534"/>
    </location>
</feature>
<feature type="modified residue" description="Phosphoserine" evidence="4">
    <location>
        <position position="587"/>
    </location>
</feature>
<feature type="sequence conflict" description="In Ref. 1; CAH90319." evidence="9" ref="1">
    <original>K</original>
    <variation>M</variation>
    <location>
        <position position="548"/>
    </location>
</feature>
<feature type="sequence conflict" description="In Ref. 1; CAH90319." evidence="9" ref="1">
    <original>H</original>
    <variation>L</variation>
    <location>
        <position position="642"/>
    </location>
</feature>
<feature type="sequence conflict" description="In Ref. 1; CAH90319." evidence="9" ref="1">
    <original>M</original>
    <variation>I</variation>
    <location>
        <position position="797"/>
    </location>
</feature>
<feature type="sequence conflict" description="In Ref. 1; CAH90319." evidence="9" ref="1">
    <original>P</original>
    <variation>S</variation>
    <location>
        <position position="855"/>
    </location>
</feature>
<feature type="sequence conflict" description="In Ref. 1; CAH90319." evidence="9" ref="1">
    <original>A</original>
    <variation>V</variation>
    <location>
        <position position="924"/>
    </location>
</feature>
<dbReference type="EC" id="2.7.11.1"/>
<dbReference type="EMBL" id="CR857393">
    <property type="protein sequence ID" value="CAH89686.1"/>
    <property type="molecule type" value="mRNA"/>
</dbReference>
<dbReference type="EMBL" id="CR858080">
    <property type="protein sequence ID" value="CAH90319.1"/>
    <property type="molecule type" value="mRNA"/>
</dbReference>
<dbReference type="RefSeq" id="NP_001124763.1">
    <property type="nucleotide sequence ID" value="NM_001131291.1"/>
</dbReference>
<dbReference type="SMR" id="Q5REX1"/>
<dbReference type="STRING" id="9601.ENSPPYP00000004424"/>
<dbReference type="GeneID" id="100171614"/>
<dbReference type="KEGG" id="pon:100171614"/>
<dbReference type="CTD" id="23235"/>
<dbReference type="eggNOG" id="KOG0586">
    <property type="taxonomic scope" value="Eukaryota"/>
</dbReference>
<dbReference type="InParanoid" id="Q5REX1"/>
<dbReference type="OrthoDB" id="193931at2759"/>
<dbReference type="Proteomes" id="UP000001595">
    <property type="component" value="Unplaced"/>
</dbReference>
<dbReference type="GO" id="GO:0005737">
    <property type="term" value="C:cytoplasm"/>
    <property type="evidence" value="ECO:0000250"/>
    <property type="project" value="UniProtKB"/>
</dbReference>
<dbReference type="GO" id="GO:0005789">
    <property type="term" value="C:endoplasmic reticulum membrane"/>
    <property type="evidence" value="ECO:0007669"/>
    <property type="project" value="UniProtKB-SubCell"/>
</dbReference>
<dbReference type="GO" id="GO:0005524">
    <property type="term" value="F:ATP binding"/>
    <property type="evidence" value="ECO:0000250"/>
    <property type="project" value="UniProtKB"/>
</dbReference>
<dbReference type="GO" id="GO:0000287">
    <property type="term" value="F:magnesium ion binding"/>
    <property type="evidence" value="ECO:0000250"/>
    <property type="project" value="UniProtKB"/>
</dbReference>
<dbReference type="GO" id="GO:0106310">
    <property type="term" value="F:protein serine kinase activity"/>
    <property type="evidence" value="ECO:0007669"/>
    <property type="project" value="RHEA"/>
</dbReference>
<dbReference type="GO" id="GO:0004674">
    <property type="term" value="F:protein serine/threonine kinase activity"/>
    <property type="evidence" value="ECO:0000250"/>
    <property type="project" value="UniProtKB"/>
</dbReference>
<dbReference type="GO" id="GO:0035556">
    <property type="term" value="P:intracellular signal transduction"/>
    <property type="evidence" value="ECO:0000250"/>
    <property type="project" value="UniProtKB"/>
</dbReference>
<dbReference type="GO" id="GO:0000226">
    <property type="term" value="P:microtubule cytoskeleton organization"/>
    <property type="evidence" value="ECO:0007669"/>
    <property type="project" value="TreeGrafter"/>
</dbReference>
<dbReference type="GO" id="GO:0046777">
    <property type="term" value="P:protein autophosphorylation"/>
    <property type="evidence" value="ECO:0000250"/>
    <property type="project" value="UniProtKB"/>
</dbReference>
<dbReference type="GO" id="GO:0006468">
    <property type="term" value="P:protein phosphorylation"/>
    <property type="evidence" value="ECO:0000250"/>
    <property type="project" value="UniProtKB"/>
</dbReference>
<dbReference type="GO" id="GO:0046626">
    <property type="term" value="P:regulation of insulin receptor signaling pathway"/>
    <property type="evidence" value="ECO:0000250"/>
    <property type="project" value="UniProtKB"/>
</dbReference>
<dbReference type="CDD" id="cd14071">
    <property type="entry name" value="STKc_SIK"/>
    <property type="match status" value="1"/>
</dbReference>
<dbReference type="CDD" id="cd14409">
    <property type="entry name" value="UBA_SIK2"/>
    <property type="match status" value="1"/>
</dbReference>
<dbReference type="FunFam" id="3.30.200.20:FF:000003">
    <property type="entry name" value="Non-specific serine/threonine protein kinase"/>
    <property type="match status" value="1"/>
</dbReference>
<dbReference type="FunFam" id="1.10.510.10:FF:000154">
    <property type="entry name" value="Serine/threonine-protein kinase SIK2"/>
    <property type="match status" value="1"/>
</dbReference>
<dbReference type="Gene3D" id="1.10.510.10">
    <property type="entry name" value="Transferase(Phosphotransferase) domain 1"/>
    <property type="match status" value="1"/>
</dbReference>
<dbReference type="InterPro" id="IPR011009">
    <property type="entry name" value="Kinase-like_dom_sf"/>
</dbReference>
<dbReference type="InterPro" id="IPR000719">
    <property type="entry name" value="Prot_kinase_dom"/>
</dbReference>
<dbReference type="InterPro" id="IPR017441">
    <property type="entry name" value="Protein_kinase_ATP_BS"/>
</dbReference>
<dbReference type="InterPro" id="IPR008271">
    <property type="entry name" value="Ser/Thr_kinase_AS"/>
</dbReference>
<dbReference type="InterPro" id="IPR017090">
    <property type="entry name" value="Ser/Thr_kinase_SIK1/2"/>
</dbReference>
<dbReference type="InterPro" id="IPR034672">
    <property type="entry name" value="SIK"/>
</dbReference>
<dbReference type="InterPro" id="IPR015940">
    <property type="entry name" value="UBA"/>
</dbReference>
<dbReference type="PANTHER" id="PTHR24346">
    <property type="entry name" value="MAP/MICROTUBULE AFFINITY-REGULATING KINASE"/>
    <property type="match status" value="1"/>
</dbReference>
<dbReference type="PANTHER" id="PTHR24346:SF38">
    <property type="entry name" value="NON-SPECIFIC SERINE_THREONINE PROTEIN KINASE"/>
    <property type="match status" value="1"/>
</dbReference>
<dbReference type="Pfam" id="PF00069">
    <property type="entry name" value="Pkinase"/>
    <property type="match status" value="1"/>
</dbReference>
<dbReference type="Pfam" id="PF23312">
    <property type="entry name" value="UBA_SIK3"/>
    <property type="match status" value="1"/>
</dbReference>
<dbReference type="PIRSF" id="PIRSF037014">
    <property type="entry name" value="Ser/Thr_PK_SNF1-like"/>
    <property type="match status" value="1"/>
</dbReference>
<dbReference type="SMART" id="SM00220">
    <property type="entry name" value="S_TKc"/>
    <property type="match status" value="1"/>
</dbReference>
<dbReference type="SUPFAM" id="SSF56112">
    <property type="entry name" value="Protein kinase-like (PK-like)"/>
    <property type="match status" value="1"/>
</dbReference>
<dbReference type="PROSITE" id="PS00107">
    <property type="entry name" value="PROTEIN_KINASE_ATP"/>
    <property type="match status" value="1"/>
</dbReference>
<dbReference type="PROSITE" id="PS50011">
    <property type="entry name" value="PROTEIN_KINASE_DOM"/>
    <property type="match status" value="1"/>
</dbReference>
<dbReference type="PROSITE" id="PS00108">
    <property type="entry name" value="PROTEIN_KINASE_ST"/>
    <property type="match status" value="1"/>
</dbReference>
<dbReference type="PROSITE" id="PS50030">
    <property type="entry name" value="UBA"/>
    <property type="match status" value="1"/>
</dbReference>
<evidence type="ECO:0000250" key="1"/>
<evidence type="ECO:0000250" key="2">
    <source>
        <dbReference type="UniProtKB" id="Q13131"/>
    </source>
</evidence>
<evidence type="ECO:0000250" key="3">
    <source>
        <dbReference type="UniProtKB" id="Q8CFH6"/>
    </source>
</evidence>
<evidence type="ECO:0000250" key="4">
    <source>
        <dbReference type="UniProtKB" id="Q9H0K1"/>
    </source>
</evidence>
<evidence type="ECO:0000255" key="5">
    <source>
        <dbReference type="PROSITE-ProRule" id="PRU00159"/>
    </source>
</evidence>
<evidence type="ECO:0000255" key="6">
    <source>
        <dbReference type="PROSITE-ProRule" id="PRU00212"/>
    </source>
</evidence>
<evidence type="ECO:0000255" key="7">
    <source>
        <dbReference type="PROSITE-ProRule" id="PRU10027"/>
    </source>
</evidence>
<evidence type="ECO:0000256" key="8">
    <source>
        <dbReference type="SAM" id="MobiDB-lite"/>
    </source>
</evidence>
<evidence type="ECO:0000305" key="9"/>
<evidence type="ECO:0000312" key="10">
    <source>
        <dbReference type="EMBL" id="CAH89686.1"/>
    </source>
</evidence>